<gene>
    <name type="ordered locus">YDL050C</name>
</gene>
<reference key="1">
    <citation type="journal article" date="1997" name="Nature">
        <title>The nucleotide sequence of Saccharomyces cerevisiae chromosome IV.</title>
        <authorList>
            <person name="Jacq C."/>
            <person name="Alt-Moerbe J."/>
            <person name="Andre B."/>
            <person name="Arnold W."/>
            <person name="Bahr A."/>
            <person name="Ballesta J.P.G."/>
            <person name="Bargues M."/>
            <person name="Baron L."/>
            <person name="Becker A."/>
            <person name="Biteau N."/>
            <person name="Bloecker H."/>
            <person name="Blugeon C."/>
            <person name="Boskovic J."/>
            <person name="Brandt P."/>
            <person name="Brueckner M."/>
            <person name="Buitrago M.J."/>
            <person name="Coster F."/>
            <person name="Delaveau T."/>
            <person name="del Rey F."/>
            <person name="Dujon B."/>
            <person name="Eide L.G."/>
            <person name="Garcia-Cantalejo J.M."/>
            <person name="Goffeau A."/>
            <person name="Gomez-Peris A."/>
            <person name="Granotier C."/>
            <person name="Hanemann V."/>
            <person name="Hankeln T."/>
            <person name="Hoheisel J.D."/>
            <person name="Jaeger W."/>
            <person name="Jimenez A."/>
            <person name="Jonniaux J.-L."/>
            <person name="Kraemer C."/>
            <person name="Kuester H."/>
            <person name="Laamanen P."/>
            <person name="Legros Y."/>
            <person name="Louis E.J."/>
            <person name="Moeller-Rieker S."/>
            <person name="Monnet A."/>
            <person name="Moro M."/>
            <person name="Mueller-Auer S."/>
            <person name="Nussbaumer B."/>
            <person name="Paricio N."/>
            <person name="Paulin L."/>
            <person name="Perea J."/>
            <person name="Perez-Alonso M."/>
            <person name="Perez-Ortin J.E."/>
            <person name="Pohl T.M."/>
            <person name="Prydz H."/>
            <person name="Purnelle B."/>
            <person name="Rasmussen S.W."/>
            <person name="Remacha M.A."/>
            <person name="Revuelta J.L."/>
            <person name="Rieger M."/>
            <person name="Salom D."/>
            <person name="Saluz H.P."/>
            <person name="Saiz J.E."/>
            <person name="Saren A.-M."/>
            <person name="Schaefer M."/>
            <person name="Scharfe M."/>
            <person name="Schmidt E.R."/>
            <person name="Schneider C."/>
            <person name="Scholler P."/>
            <person name="Schwarz S."/>
            <person name="Soler-Mira A."/>
            <person name="Urrestarazu L.A."/>
            <person name="Verhasselt P."/>
            <person name="Vissers S."/>
            <person name="Voet M."/>
            <person name="Volckaert G."/>
            <person name="Wagner G."/>
            <person name="Wambutt R."/>
            <person name="Wedler E."/>
            <person name="Wedler H."/>
            <person name="Woelfl S."/>
            <person name="Harris D.E."/>
            <person name="Bowman S."/>
            <person name="Brown D."/>
            <person name="Churcher C.M."/>
            <person name="Connor R."/>
            <person name="Dedman K."/>
            <person name="Gentles S."/>
            <person name="Hamlin N."/>
            <person name="Hunt S."/>
            <person name="Jones L."/>
            <person name="McDonald S."/>
            <person name="Murphy L.D."/>
            <person name="Niblett D."/>
            <person name="Odell C."/>
            <person name="Oliver K."/>
            <person name="Rajandream M.A."/>
            <person name="Richards C."/>
            <person name="Shore L."/>
            <person name="Walsh S.V."/>
            <person name="Barrell B.G."/>
            <person name="Dietrich F.S."/>
            <person name="Mulligan J.T."/>
            <person name="Allen E."/>
            <person name="Araujo R."/>
            <person name="Aviles E."/>
            <person name="Berno A."/>
            <person name="Carpenter J."/>
            <person name="Chen E."/>
            <person name="Cherry J.M."/>
            <person name="Chung E."/>
            <person name="Duncan M."/>
            <person name="Hunicke-Smith S."/>
            <person name="Hyman R.W."/>
            <person name="Komp C."/>
            <person name="Lashkari D."/>
            <person name="Lew H."/>
            <person name="Lin D."/>
            <person name="Mosedale D."/>
            <person name="Nakahara K."/>
            <person name="Namath A."/>
            <person name="Oefner P."/>
            <person name="Oh C."/>
            <person name="Petel F.X."/>
            <person name="Roberts D."/>
            <person name="Schramm S."/>
            <person name="Schroeder M."/>
            <person name="Shogren T."/>
            <person name="Shroff N."/>
            <person name="Winant A."/>
            <person name="Yelton M.A."/>
            <person name="Botstein D."/>
            <person name="Davis R.W."/>
            <person name="Johnston M."/>
            <person name="Andrews S."/>
            <person name="Brinkman R."/>
            <person name="Cooper J."/>
            <person name="Ding H."/>
            <person name="Du Z."/>
            <person name="Favello A."/>
            <person name="Fulton L."/>
            <person name="Gattung S."/>
            <person name="Greco T."/>
            <person name="Hallsworth K."/>
            <person name="Hawkins J."/>
            <person name="Hillier L.W."/>
            <person name="Jier M."/>
            <person name="Johnson D."/>
            <person name="Johnston L."/>
            <person name="Kirsten J."/>
            <person name="Kucaba T."/>
            <person name="Langston Y."/>
            <person name="Latreille P."/>
            <person name="Le T."/>
            <person name="Mardis E."/>
            <person name="Menezes S."/>
            <person name="Miller N."/>
            <person name="Nhan M."/>
            <person name="Pauley A."/>
            <person name="Peluso D."/>
            <person name="Rifkin L."/>
            <person name="Riles L."/>
            <person name="Taich A."/>
            <person name="Trevaskis E."/>
            <person name="Vignati D."/>
            <person name="Wilcox L."/>
            <person name="Wohldman P."/>
            <person name="Vaudin M."/>
            <person name="Wilson R."/>
            <person name="Waterston R."/>
            <person name="Albermann K."/>
            <person name="Hani J."/>
            <person name="Heumann K."/>
            <person name="Kleine K."/>
            <person name="Mewes H.-W."/>
            <person name="Zollner A."/>
            <person name="Zaccaria P."/>
        </authorList>
    </citation>
    <scope>NUCLEOTIDE SEQUENCE [LARGE SCALE GENOMIC DNA]</scope>
    <source>
        <strain>ATCC 204508 / S288c</strain>
    </source>
</reference>
<reference key="2">
    <citation type="journal article" date="2014" name="G3 (Bethesda)">
        <title>The reference genome sequence of Saccharomyces cerevisiae: Then and now.</title>
        <authorList>
            <person name="Engel S.R."/>
            <person name="Dietrich F.S."/>
            <person name="Fisk D.G."/>
            <person name="Binkley G."/>
            <person name="Balakrishnan R."/>
            <person name="Costanzo M.C."/>
            <person name="Dwight S.S."/>
            <person name="Hitz B.C."/>
            <person name="Karra K."/>
            <person name="Nash R.S."/>
            <person name="Weng S."/>
            <person name="Wong E.D."/>
            <person name="Lloyd P."/>
            <person name="Skrzypek M.S."/>
            <person name="Miyasato S.R."/>
            <person name="Simison M."/>
            <person name="Cherry J.M."/>
        </authorList>
    </citation>
    <scope>GENOME REANNOTATION</scope>
    <source>
        <strain>ATCC 204508 / S288c</strain>
    </source>
</reference>
<accession>Q07355</accession>
<evidence type="ECO:0000255" key="1"/>
<evidence type="ECO:0000305" key="2"/>
<evidence type="ECO:0000305" key="3">
    <source>
    </source>
</evidence>
<protein>
    <recommendedName>
        <fullName>Putative uncharacterized protein YDL050C</fullName>
    </recommendedName>
</protein>
<keyword id="KW-0472">Membrane</keyword>
<keyword id="KW-0812">Transmembrane</keyword>
<keyword id="KW-1133">Transmembrane helix</keyword>
<organism>
    <name type="scientific">Saccharomyces cerevisiae (strain ATCC 204508 / S288c)</name>
    <name type="common">Baker's yeast</name>
    <dbReference type="NCBI Taxonomy" id="559292"/>
    <lineage>
        <taxon>Eukaryota</taxon>
        <taxon>Fungi</taxon>
        <taxon>Dikarya</taxon>
        <taxon>Ascomycota</taxon>
        <taxon>Saccharomycotina</taxon>
        <taxon>Saccharomycetes</taxon>
        <taxon>Saccharomycetales</taxon>
        <taxon>Saccharomycetaceae</taxon>
        <taxon>Saccharomyces</taxon>
    </lineage>
</organism>
<proteinExistence type="uncertain"/>
<dbReference type="EMBL" id="Z74099">
    <property type="protein sequence ID" value="CAA98613.1"/>
    <property type="molecule type" value="Genomic_DNA"/>
</dbReference>
<dbReference type="PIR" id="S67584">
    <property type="entry name" value="S67584"/>
</dbReference>
<dbReference type="DIP" id="DIP-5228N"/>
<dbReference type="IntAct" id="Q07355">
    <property type="interactions" value="1"/>
</dbReference>
<dbReference type="PaxDb" id="4932-YDL050C"/>
<dbReference type="TopDownProteomics" id="Q07355"/>
<dbReference type="EnsemblFungi" id="YDL050C_mRNA">
    <property type="protein sequence ID" value="YDL050C"/>
    <property type="gene ID" value="YDL050C"/>
</dbReference>
<dbReference type="AGR" id="SGD:S000002208"/>
<dbReference type="SGD" id="S000002208">
    <property type="gene designation" value="YDL050C"/>
</dbReference>
<dbReference type="HOGENOM" id="CLU_2016995_0_0_1"/>
<dbReference type="GO" id="GO:0016020">
    <property type="term" value="C:membrane"/>
    <property type="evidence" value="ECO:0007669"/>
    <property type="project" value="UniProtKB-SubCell"/>
</dbReference>
<comment type="subcellular location">
    <subcellularLocation>
        <location evidence="2">Membrane</location>
        <topology evidence="2">Single-pass membrane protein</topology>
    </subcellularLocation>
</comment>
<comment type="miscellaneous">
    <text evidence="2">Partially overlaps LHP1.</text>
</comment>
<comment type="caution">
    <text evidence="3">Product of a dubious gene prediction unlikely to encode a functional protein. Because of that it is not part of the S.cerevisiae S288c complete/reference proteome set.</text>
</comment>
<sequence length="123" mass="14094">MIMRYENQKKHKNHSLCSSSSSAMAEESSFDSSLPFFFLFLGNLGKFFFLWPLKDLDLPLKFLDFEASLCKSNCFFVKTLSFLPSYDKISLDSSSLEYDFKKASHSGIVLNSTKTVPLNFLFL</sequence>
<name>YD050_YEAST</name>
<feature type="chain" id="PRO_0000299851" description="Putative uncharacterized protein YDL050C">
    <location>
        <begin position="1"/>
        <end position="123"/>
    </location>
</feature>
<feature type="transmembrane region" description="Helical" evidence="1">
    <location>
        <begin position="34"/>
        <end position="53"/>
    </location>
</feature>